<dbReference type="EMBL" id="AF061443">
    <property type="protein sequence ID" value="AAC77910.1"/>
    <property type="molecule type" value="mRNA"/>
</dbReference>
<dbReference type="EMBL" id="AABR06025467">
    <property type="status" value="NOT_ANNOTATED_CDS"/>
    <property type="molecule type" value="Genomic_DNA"/>
</dbReference>
<dbReference type="EMBL" id="AABR06025468">
    <property type="status" value="NOT_ANNOTATED_CDS"/>
    <property type="molecule type" value="Genomic_DNA"/>
</dbReference>
<dbReference type="EMBL" id="AABR06025469">
    <property type="status" value="NOT_ANNOTATED_CDS"/>
    <property type="molecule type" value="Genomic_DNA"/>
</dbReference>
<dbReference type="EMBL" id="AABR06025470">
    <property type="status" value="NOT_ANNOTATED_CDS"/>
    <property type="molecule type" value="Genomic_DNA"/>
</dbReference>
<dbReference type="EMBL" id="AABR06025471">
    <property type="status" value="NOT_ANNOTATED_CDS"/>
    <property type="molecule type" value="Genomic_DNA"/>
</dbReference>
<dbReference type="EMBL" id="CH473949">
    <property type="protein sequence ID" value="EDL79759.1"/>
    <property type="molecule type" value="Genomic_DNA"/>
</dbReference>
<dbReference type="RefSeq" id="NP_775450.2">
    <property type="nucleotide sequence ID" value="NM_173328.2"/>
</dbReference>
<dbReference type="SMR" id="Q9Z2H4"/>
<dbReference type="FunCoup" id="Q9Z2H4">
    <property type="interactions" value="597"/>
</dbReference>
<dbReference type="STRING" id="10116.ENSRNOP00000007681"/>
<dbReference type="GlyCosmos" id="Q9Z2H4">
    <property type="glycosylation" value="6 sites, No reported glycans"/>
</dbReference>
<dbReference type="GlyGen" id="Q9Z2H4">
    <property type="glycosylation" value="6 sites"/>
</dbReference>
<dbReference type="PhosphoSitePlus" id="Q9Z2H4"/>
<dbReference type="PaxDb" id="10116-ENSRNOP00000007681"/>
<dbReference type="Ensembl" id="ENSRNOT00000007681.5">
    <property type="protein sequence ID" value="ENSRNOP00000007681.3"/>
    <property type="gene ID" value="ENSRNOG00000005715.6"/>
</dbReference>
<dbReference type="GeneID" id="286994"/>
<dbReference type="KEGG" id="rno:286994"/>
<dbReference type="UCSC" id="RGD:628615">
    <property type="organism name" value="rat"/>
</dbReference>
<dbReference type="AGR" id="RGD:628615"/>
<dbReference type="CTD" id="55366"/>
<dbReference type="RGD" id="628615">
    <property type="gene designation" value="Lgr4"/>
</dbReference>
<dbReference type="eggNOG" id="KOG0619">
    <property type="taxonomic scope" value="Eukaryota"/>
</dbReference>
<dbReference type="eggNOG" id="KOG2087">
    <property type="taxonomic scope" value="Eukaryota"/>
</dbReference>
<dbReference type="GeneTree" id="ENSGT00940000157925"/>
<dbReference type="HOGENOM" id="CLU_006843_0_0_1"/>
<dbReference type="InParanoid" id="Q9Z2H4"/>
<dbReference type="OMA" id="PPGNCSM"/>
<dbReference type="OrthoDB" id="1883493at2759"/>
<dbReference type="TreeFam" id="TF316814"/>
<dbReference type="PRO" id="PR:Q9Z2H4"/>
<dbReference type="Proteomes" id="UP000002494">
    <property type="component" value="Chromosome 3"/>
</dbReference>
<dbReference type="Proteomes" id="UP000234681">
    <property type="component" value="Chromosome 3"/>
</dbReference>
<dbReference type="Bgee" id="ENSRNOG00000005715">
    <property type="expression patterns" value="Expressed in stomach and 19 other cell types or tissues"/>
</dbReference>
<dbReference type="GO" id="GO:0005886">
    <property type="term" value="C:plasma membrane"/>
    <property type="evidence" value="ECO:0000250"/>
    <property type="project" value="UniProtKB"/>
</dbReference>
<dbReference type="GO" id="GO:0008201">
    <property type="term" value="F:heparin binding"/>
    <property type="evidence" value="ECO:0000318"/>
    <property type="project" value="GO_Central"/>
</dbReference>
<dbReference type="GO" id="GO:0016500">
    <property type="term" value="F:protein-hormone receptor activity"/>
    <property type="evidence" value="ECO:0007669"/>
    <property type="project" value="InterPro"/>
</dbReference>
<dbReference type="GO" id="GO:0048495">
    <property type="term" value="F:Roundabout binding"/>
    <property type="evidence" value="ECO:0000318"/>
    <property type="project" value="GO_Central"/>
</dbReference>
<dbReference type="GO" id="GO:0004888">
    <property type="term" value="F:transmembrane signaling receptor activity"/>
    <property type="evidence" value="ECO:0000250"/>
    <property type="project" value="UniProtKB"/>
</dbReference>
<dbReference type="GO" id="GO:0030282">
    <property type="term" value="P:bone mineralization"/>
    <property type="evidence" value="ECO:0000250"/>
    <property type="project" value="UniProtKB"/>
</dbReference>
<dbReference type="GO" id="GO:0046849">
    <property type="term" value="P:bone remodeling"/>
    <property type="evidence" value="ECO:0000250"/>
    <property type="project" value="UniProtKB"/>
</dbReference>
<dbReference type="GO" id="GO:0032922">
    <property type="term" value="P:circadian regulation of gene expression"/>
    <property type="evidence" value="ECO:0000250"/>
    <property type="project" value="UniProtKB"/>
</dbReference>
<dbReference type="GO" id="GO:0007623">
    <property type="term" value="P:circadian rhythm"/>
    <property type="evidence" value="ECO:0000266"/>
    <property type="project" value="RGD"/>
</dbReference>
<dbReference type="GO" id="GO:0048565">
    <property type="term" value="P:digestive tract development"/>
    <property type="evidence" value="ECO:0000266"/>
    <property type="project" value="RGD"/>
</dbReference>
<dbReference type="GO" id="GO:0050673">
    <property type="term" value="P:epithelial cell proliferation"/>
    <property type="evidence" value="ECO:0000266"/>
    <property type="project" value="RGD"/>
</dbReference>
<dbReference type="GO" id="GO:2001013">
    <property type="term" value="P:epithelial cell proliferation involved in renal tubule morphogenesis"/>
    <property type="evidence" value="ECO:0000266"/>
    <property type="project" value="RGD"/>
</dbReference>
<dbReference type="GO" id="GO:0007186">
    <property type="term" value="P:G protein-coupled receptor signaling pathway"/>
    <property type="evidence" value="ECO:0007669"/>
    <property type="project" value="UniProtKB-KW"/>
</dbReference>
<dbReference type="GO" id="GO:0001942">
    <property type="term" value="P:hair follicle development"/>
    <property type="evidence" value="ECO:0000266"/>
    <property type="project" value="RGD"/>
</dbReference>
<dbReference type="GO" id="GO:0045087">
    <property type="term" value="P:innate immune response"/>
    <property type="evidence" value="ECO:0007669"/>
    <property type="project" value="UniProtKB-KW"/>
</dbReference>
<dbReference type="GO" id="GO:0036335">
    <property type="term" value="P:intestinal stem cell homeostasis"/>
    <property type="evidence" value="ECO:0000266"/>
    <property type="project" value="RGD"/>
</dbReference>
<dbReference type="GO" id="GO:0030539">
    <property type="term" value="P:male genitalia development"/>
    <property type="evidence" value="ECO:0000266"/>
    <property type="project" value="RGD"/>
</dbReference>
<dbReference type="GO" id="GO:0072224">
    <property type="term" value="P:metanephric glomerulus development"/>
    <property type="evidence" value="ECO:0000266"/>
    <property type="project" value="RGD"/>
</dbReference>
<dbReference type="GO" id="GO:0072282">
    <property type="term" value="P:metanephric nephron tubule morphogenesis"/>
    <property type="evidence" value="ECO:0000266"/>
    <property type="project" value="RGD"/>
</dbReference>
<dbReference type="GO" id="GO:0050919">
    <property type="term" value="P:negative chemotaxis"/>
    <property type="evidence" value="ECO:0000318"/>
    <property type="project" value="GO_Central"/>
</dbReference>
<dbReference type="GO" id="GO:0120163">
    <property type="term" value="P:negative regulation of cold-induced thermogenesis"/>
    <property type="evidence" value="ECO:0000250"/>
    <property type="project" value="YuBioLab"/>
</dbReference>
<dbReference type="GO" id="GO:0001818">
    <property type="term" value="P:negative regulation of cytokine production"/>
    <property type="evidence" value="ECO:0000250"/>
    <property type="project" value="UniProtKB"/>
</dbReference>
<dbReference type="GO" id="GO:0034122">
    <property type="term" value="P:negative regulation of toll-like receptor signaling pathway"/>
    <property type="evidence" value="ECO:0000250"/>
    <property type="project" value="UniProtKB"/>
</dbReference>
<dbReference type="GO" id="GO:0001649">
    <property type="term" value="P:osteoblast differentiation"/>
    <property type="evidence" value="ECO:0000250"/>
    <property type="project" value="UniProtKB"/>
</dbReference>
<dbReference type="GO" id="GO:0090190">
    <property type="term" value="P:positive regulation of branching involved in ureteric bud morphogenesis"/>
    <property type="evidence" value="ECO:0000266"/>
    <property type="project" value="RGD"/>
</dbReference>
<dbReference type="GO" id="GO:0090263">
    <property type="term" value="P:positive regulation of canonical Wnt signaling pathway"/>
    <property type="evidence" value="ECO:0000250"/>
    <property type="project" value="UniProtKB"/>
</dbReference>
<dbReference type="GO" id="GO:0007283">
    <property type="term" value="P:spermatogenesis"/>
    <property type="evidence" value="ECO:0000250"/>
    <property type="project" value="UniProtKB"/>
</dbReference>
<dbReference type="GO" id="GO:0035239">
    <property type="term" value="P:tube morphogenesis"/>
    <property type="evidence" value="ECO:0000266"/>
    <property type="project" value="RGD"/>
</dbReference>
<dbReference type="GO" id="GO:0016055">
    <property type="term" value="P:Wnt signaling pathway"/>
    <property type="evidence" value="ECO:0007669"/>
    <property type="project" value="UniProtKB-KW"/>
</dbReference>
<dbReference type="CDD" id="cd15361">
    <property type="entry name" value="7tmA_LGR4"/>
    <property type="match status" value="1"/>
</dbReference>
<dbReference type="FunFam" id="1.20.1070.10:FF:000028">
    <property type="entry name" value="leucine-rich repeat-containing G-protein coupled receptor 4 isoform X1"/>
    <property type="match status" value="1"/>
</dbReference>
<dbReference type="FunFam" id="3.80.10.10:FF:000028">
    <property type="entry name" value="leucine-rich repeat-containing G-protein coupled receptor 4 isoform X1"/>
    <property type="match status" value="1"/>
</dbReference>
<dbReference type="Gene3D" id="1.20.1070.10">
    <property type="entry name" value="Rhodopsin 7-helix transmembrane proteins"/>
    <property type="match status" value="1"/>
</dbReference>
<dbReference type="Gene3D" id="3.80.10.10">
    <property type="entry name" value="Ribonuclease Inhibitor"/>
    <property type="match status" value="1"/>
</dbReference>
<dbReference type="InterPro" id="IPR000276">
    <property type="entry name" value="GPCR_Rhodpsn"/>
</dbReference>
<dbReference type="InterPro" id="IPR017452">
    <property type="entry name" value="GPCR_Rhodpsn_7TM"/>
</dbReference>
<dbReference type="InterPro" id="IPR002131">
    <property type="entry name" value="Gphrmn_rcpt_fam"/>
</dbReference>
<dbReference type="InterPro" id="IPR001611">
    <property type="entry name" value="Leu-rich_rpt"/>
</dbReference>
<dbReference type="InterPro" id="IPR003591">
    <property type="entry name" value="Leu-rich_rpt_typical-subtyp"/>
</dbReference>
<dbReference type="InterPro" id="IPR032675">
    <property type="entry name" value="LRR_dom_sf"/>
</dbReference>
<dbReference type="InterPro" id="IPR000372">
    <property type="entry name" value="LRRNT"/>
</dbReference>
<dbReference type="PANTHER" id="PTHR24372">
    <property type="entry name" value="GLYCOPROTEIN HORMONE RECEPTOR"/>
    <property type="match status" value="1"/>
</dbReference>
<dbReference type="PANTHER" id="PTHR24372:SF67">
    <property type="entry name" value="LEUCINE-RICH REPEAT-CONTAINING G-PROTEIN COUPLED RECEPTOR 4"/>
    <property type="match status" value="1"/>
</dbReference>
<dbReference type="Pfam" id="PF00001">
    <property type="entry name" value="7tm_1"/>
    <property type="match status" value="1"/>
</dbReference>
<dbReference type="Pfam" id="PF00560">
    <property type="entry name" value="LRR_1"/>
    <property type="match status" value="1"/>
</dbReference>
<dbReference type="Pfam" id="PF13855">
    <property type="entry name" value="LRR_8"/>
    <property type="match status" value="4"/>
</dbReference>
<dbReference type="Pfam" id="PF01462">
    <property type="entry name" value="LRRNT"/>
    <property type="match status" value="1"/>
</dbReference>
<dbReference type="PRINTS" id="PR00373">
    <property type="entry name" value="GLYCHORMONER"/>
</dbReference>
<dbReference type="PRINTS" id="PR00237">
    <property type="entry name" value="GPCRRHODOPSN"/>
</dbReference>
<dbReference type="SMART" id="SM00364">
    <property type="entry name" value="LRR_BAC"/>
    <property type="match status" value="10"/>
</dbReference>
<dbReference type="SMART" id="SM00365">
    <property type="entry name" value="LRR_SD22"/>
    <property type="match status" value="6"/>
</dbReference>
<dbReference type="SMART" id="SM00369">
    <property type="entry name" value="LRR_TYP"/>
    <property type="match status" value="15"/>
</dbReference>
<dbReference type="SMART" id="SM00013">
    <property type="entry name" value="LRRNT"/>
    <property type="match status" value="1"/>
</dbReference>
<dbReference type="SUPFAM" id="SSF81321">
    <property type="entry name" value="Family A G protein-coupled receptor-like"/>
    <property type="match status" value="1"/>
</dbReference>
<dbReference type="SUPFAM" id="SSF52058">
    <property type="entry name" value="L domain-like"/>
    <property type="match status" value="2"/>
</dbReference>
<dbReference type="PROSITE" id="PS50262">
    <property type="entry name" value="G_PROTEIN_RECEP_F1_2"/>
    <property type="match status" value="1"/>
</dbReference>
<dbReference type="PROSITE" id="PS51450">
    <property type="entry name" value="LRR"/>
    <property type="match status" value="15"/>
</dbReference>
<gene>
    <name type="primary">Lgr4</name>
    <name type="synonym">Gpr48</name>
</gene>
<keyword id="KW-0090">Biological rhythms</keyword>
<keyword id="KW-1003">Cell membrane</keyword>
<keyword id="KW-0217">Developmental protein</keyword>
<keyword id="KW-0221">Differentiation</keyword>
<keyword id="KW-1015">Disulfide bond</keyword>
<keyword id="KW-0297">G-protein coupled receptor</keyword>
<keyword id="KW-0325">Glycoprotein</keyword>
<keyword id="KW-0391">Immunity</keyword>
<keyword id="KW-0399">Innate immunity</keyword>
<keyword id="KW-0433">Leucine-rich repeat</keyword>
<keyword id="KW-0472">Membrane</keyword>
<keyword id="KW-0597">Phosphoprotein</keyword>
<keyword id="KW-0675">Receptor</keyword>
<keyword id="KW-1185">Reference proteome</keyword>
<keyword id="KW-0677">Repeat</keyword>
<keyword id="KW-0732">Signal</keyword>
<keyword id="KW-0744">Spermatogenesis</keyword>
<keyword id="KW-0807">Transducer</keyword>
<keyword id="KW-0812">Transmembrane</keyword>
<keyword id="KW-1133">Transmembrane helix</keyword>
<keyword id="KW-0879">Wnt signaling pathway</keyword>
<proteinExistence type="evidence at transcript level"/>
<protein>
    <recommendedName>
        <fullName>Leucine-rich repeat-containing G-protein coupled receptor 4</fullName>
    </recommendedName>
    <alternativeName>
        <fullName>G-protein coupled receptor 48</fullName>
    </alternativeName>
</protein>
<feature type="signal peptide" evidence="3">
    <location>
        <begin position="1"/>
        <end position="24"/>
    </location>
</feature>
<feature type="chain" id="PRO_0000012793" description="Leucine-rich repeat-containing G-protein coupled receptor 4">
    <location>
        <begin position="25"/>
        <end position="951"/>
    </location>
</feature>
<feature type="topological domain" description="Extracellular" evidence="3">
    <location>
        <begin position="25"/>
        <end position="544"/>
    </location>
</feature>
<feature type="transmembrane region" description="Helical; Name=1" evidence="3">
    <location>
        <begin position="545"/>
        <end position="565"/>
    </location>
</feature>
<feature type="topological domain" description="Cytoplasmic" evidence="3">
    <location>
        <begin position="566"/>
        <end position="575"/>
    </location>
</feature>
<feature type="transmembrane region" description="Helical; Name=2" evidence="3">
    <location>
        <begin position="576"/>
        <end position="596"/>
    </location>
</feature>
<feature type="topological domain" description="Extracellular" evidence="3">
    <location>
        <begin position="597"/>
        <end position="619"/>
    </location>
</feature>
<feature type="transmembrane region" description="Helical; Name=3" evidence="3">
    <location>
        <begin position="620"/>
        <end position="640"/>
    </location>
</feature>
<feature type="topological domain" description="Cytoplasmic" evidence="3">
    <location>
        <begin position="641"/>
        <end position="661"/>
    </location>
</feature>
<feature type="transmembrane region" description="Helical; Name=4" evidence="3">
    <location>
        <begin position="662"/>
        <end position="682"/>
    </location>
</feature>
<feature type="topological domain" description="Extracellular" evidence="3">
    <location>
        <begin position="683"/>
        <end position="703"/>
    </location>
</feature>
<feature type="transmembrane region" description="Helical; Name=5" evidence="3">
    <location>
        <begin position="704"/>
        <end position="724"/>
    </location>
</feature>
<feature type="topological domain" description="Cytoplasmic" evidence="3">
    <location>
        <begin position="725"/>
        <end position="756"/>
    </location>
</feature>
<feature type="transmembrane region" description="Helical; Name=6" evidence="3">
    <location>
        <begin position="757"/>
        <end position="777"/>
    </location>
</feature>
<feature type="topological domain" description="Extracellular" evidence="3">
    <location>
        <begin position="778"/>
        <end position="783"/>
    </location>
</feature>
<feature type="transmembrane region" description="Helical; Name=7" evidence="3">
    <location>
        <begin position="784"/>
        <end position="804"/>
    </location>
</feature>
<feature type="topological domain" description="Cytoplasmic" evidence="3">
    <location>
        <begin position="805"/>
        <end position="951"/>
    </location>
</feature>
<feature type="domain" description="LRRNT">
    <location>
        <begin position="25"/>
        <end position="57"/>
    </location>
</feature>
<feature type="repeat" description="LRR 1">
    <location>
        <begin position="58"/>
        <end position="79"/>
    </location>
</feature>
<feature type="repeat" description="LRR 2">
    <location>
        <begin position="82"/>
        <end position="103"/>
    </location>
</feature>
<feature type="repeat" description="LRR 3">
    <location>
        <begin position="106"/>
        <end position="127"/>
    </location>
</feature>
<feature type="repeat" description="LRR 4">
    <location>
        <begin position="130"/>
        <end position="151"/>
    </location>
</feature>
<feature type="repeat" description="LRR 5">
    <location>
        <begin position="154"/>
        <end position="177"/>
    </location>
</feature>
<feature type="repeat" description="LRR 6">
    <location>
        <begin position="178"/>
        <end position="199"/>
    </location>
</feature>
<feature type="repeat" description="LRR 7">
    <location>
        <begin position="202"/>
        <end position="223"/>
    </location>
</feature>
<feature type="repeat" description="LRR 8">
    <location>
        <begin position="226"/>
        <end position="247"/>
    </location>
</feature>
<feature type="repeat" description="LRR 9">
    <location>
        <begin position="249"/>
        <end position="270"/>
    </location>
</feature>
<feature type="repeat" description="LRR 10">
    <location>
        <begin position="273"/>
        <end position="294"/>
    </location>
</feature>
<feature type="repeat" description="LRR 11">
    <location>
        <begin position="320"/>
        <end position="341"/>
    </location>
</feature>
<feature type="repeat" description="LRR 12">
    <location>
        <begin position="344"/>
        <end position="365"/>
    </location>
</feature>
<feature type="repeat" description="LRR 13">
    <location>
        <begin position="366"/>
        <end position="387"/>
    </location>
</feature>
<feature type="repeat" description="LRR 14">
    <location>
        <begin position="390"/>
        <end position="411"/>
    </location>
</feature>
<feature type="repeat" description="LRR 15">
    <location>
        <begin position="414"/>
        <end position="435"/>
    </location>
</feature>
<feature type="modified residue" description="Phosphoserine" evidence="2">
    <location>
        <position position="920"/>
    </location>
</feature>
<feature type="glycosylation site" description="N-linked (GlcNAc...) asparagine" evidence="3">
    <location>
        <position position="68"/>
    </location>
</feature>
<feature type="glycosylation site" description="N-linked (GlcNAc...) asparagine" evidence="3">
    <location>
        <position position="188"/>
    </location>
</feature>
<feature type="glycosylation site" description="N-linked (GlcNAc...) asparagine" evidence="3">
    <location>
        <position position="199"/>
    </location>
</feature>
<feature type="glycosylation site" description="N-linked (GlcNAc...) asparagine" evidence="3">
    <location>
        <position position="294"/>
    </location>
</feature>
<feature type="glycosylation site" description="N-linked (GlcNAc...) asparagine" evidence="3">
    <location>
        <position position="314"/>
    </location>
</feature>
<feature type="glycosylation site" description="N-linked (GlcNAc...) asparagine" evidence="3">
    <location>
        <position position="505"/>
    </location>
</feature>
<feature type="disulfide bond" evidence="4">
    <location>
        <begin position="29"/>
        <end position="35"/>
    </location>
</feature>
<feature type="disulfide bond" evidence="4">
    <location>
        <begin position="33"/>
        <end position="43"/>
    </location>
</feature>
<feature type="disulfide bond" evidence="4">
    <location>
        <begin position="339"/>
        <end position="364"/>
    </location>
</feature>
<feature type="disulfide bond" evidence="4">
    <location>
        <begin position="470"/>
        <end position="522"/>
    </location>
</feature>
<feature type="disulfide bond" evidence="4">
    <location>
        <begin position="471"/>
        <end position="476"/>
    </location>
</feature>
<feature type="disulfide bond" evidence="4">
    <location>
        <begin position="618"/>
        <end position="693"/>
    </location>
</feature>
<feature type="sequence conflict" description="In Ref. 1; AAC77910." evidence="5" ref="1">
    <original>R</original>
    <variation>G</variation>
    <location>
        <position position="6"/>
    </location>
</feature>
<feature type="sequence conflict" description="In Ref. 1; AAC77910." evidence="5" ref="1">
    <original>F</original>
    <variation>L</variation>
    <location>
        <position position="11"/>
    </location>
</feature>
<feature type="sequence conflict" description="In Ref. 1; AAC77910." evidence="5" ref="1">
    <original>F</original>
    <variation>L</variation>
    <location>
        <position position="95"/>
    </location>
</feature>
<feature type="sequence conflict" description="In Ref. 1; AAC77910." evidence="5" ref="1">
    <original>N</original>
    <variation>Y</variation>
    <location>
        <position position="236"/>
    </location>
</feature>
<feature type="sequence conflict" description="In Ref. 1; AAC77910." evidence="5" ref="1">
    <original>S</original>
    <variation>C</variation>
    <location>
        <position position="300"/>
    </location>
</feature>
<evidence type="ECO:0000250" key="1">
    <source>
        <dbReference type="UniProtKB" id="A2ARI4"/>
    </source>
</evidence>
<evidence type="ECO:0000250" key="2">
    <source>
        <dbReference type="UniProtKB" id="Q9BXB1"/>
    </source>
</evidence>
<evidence type="ECO:0000255" key="3"/>
<evidence type="ECO:0000255" key="4">
    <source>
        <dbReference type="PROSITE-ProRule" id="PRU00521"/>
    </source>
</evidence>
<evidence type="ECO:0000305" key="5"/>
<sequence length="951" mass="104241">MPGPLRLLCFFALGLLGSAGPSGAAPPLCAAPCSCDGDRRVDCSGKGLTAVPEGLSAFTQALDISMNNITQLPEDAFKSFPFLEELQLAGNDLSFIHPKALSGLKELKVLTLQNNQLRTVPSEAIHGLSALQSLRLDANHITSVPEDSFEGLVQLRHLWLDDNSLTEVPVRPLSNLPTLQALTLALNNISSIPDFAFTNLSSLVVLHLHNNKIKSLSQHCFDGLDNLETLDLNYNNLDEFPQAIKALPSLKELGFHSNSISVIPDGAFGGNPLLRTIHLYDNPLSFVGNSAFHNLSDLHSLVIRGASLVQWFPNLTGTVHLESLTLTGTKISSIPDDLCQNQKMLRTLDLSYNNIRDLPSFNGCRALEEISLQRNQISLIKENTFQGLTSLRILDLSRNLIREIHSGAFAKLGTITNLDVSFNELTSFPTEGLNGLNQLKLVGNFKLKDALAARDFANLRSLSVPYAYQCCAFWGCDSYANLNTEDNSPQEHSVTKEKGATDAANVTSTAENEEHSQIIIHCTPSTGAFKPCEYLLGSWMIRLTVWFIFLVALLFNLLVILTVFASCSSLPASKLFIGLISVSNLLMGIYTGILTFLDAVSWGRFAEFGIWWETGSGCKVAGSLAVFSSESAVFLLTLAAVERSVFAKDLMKHGKSSHLRQFQVAALLALLGAAVAGCFPLFHGGQYSASPLCLPFPTGETPSLGFTVTLVLLNSLAFLLMAIIYTKLYCNLEKEDLSENSQSSVIKHVAWLIFTNCIFFCPVAFFSFAPLITAISISPEIMKSVTLIFFPLPACLNPVLYVFFNPKFKEDWKLLKRRVTRKHGSVSVSISSQGGCGEQDFYYDCGMYSHLQGNLTVCDCCESFLLTKPVSCKHLIKSHSCPVLTAASCQRPEAYWSDCGTQSAHSDYADEEDSFVSDSSDQVQACGRACFYQSRGFPLVRYAYNLQRVRD</sequence>
<name>LGR4_RAT</name>
<comment type="function">
    <text evidence="1 2">Receptor for R-spondins that potentiates the canonical Wnt signaling pathway and is involved in the formation of various organs. Upon binding to R-spondins (RSPO1, RSPO2, RSPO3 or RSPO4), associates with phosphorylated LRP6 and frizzled receptors that are activated by extracellular Wnt receptors, triggering the canonical Wnt signaling pathway to increase expression of target genes. In contrast to classical G-protein coupled receptors, does not activate heterotrimeric G-proteins to transduce the signal. Its function as activator of the Wnt signaling pathway is required for the development of various organs, including liver, kidney, intestine, bone, reproductive tract and eye. May also act as a receptor for norrin (NDP), such results however require additional confirmation in vivo. Required during spermatogenesis to activate the Wnt signaling pathway in peritubular myoid cells. Required for the maintenance of intestinal stem cells and Paneth cell differentiation in postnatal intestinal crypts. Acts as a regulator of bone formation and remodeling. Involved in kidney development; required for maintaining the ureteric bud in an undifferentiated state. Involved in the development of the anterior segment of the eye. Required during erythropoiesis. Also acts as a negative regulator of innate immunity by inhibiting TLR2/TLR4 associated pattern-recognition and pro-inflammatory cytokine production. Plays an important role in regulating the circadian rhythms of plasma lipids, partially through regulating the rhythmic expression of MTTP. Required for proper development of GnRH neurons (gonadotropin-releasing hormone expressing neurons) that control the release of reproductive hormones from the pituitary gland (By similarity).</text>
</comment>
<comment type="subcellular location">
    <subcellularLocation>
        <location evidence="2">Cell membrane</location>
        <topology evidence="2">Multi-pass membrane protein</topology>
    </subcellularLocation>
</comment>
<comment type="similarity">
    <text evidence="4">Belongs to the G-protein coupled receptor 1 family.</text>
</comment>
<reference key="1">
    <citation type="journal article" date="1998" name="Mol. Endocrinol.">
        <title>Characterization of two LGR genes homologous to gonadotropin and thyrotropin receptors with extracellular leucine-rich repeats and a G protein-coupled, seven-transmembrane region.</title>
        <authorList>
            <person name="Hsu S.Y."/>
            <person name="Liang S.-G."/>
            <person name="Hsueh A.J.W."/>
        </authorList>
    </citation>
    <scope>NUCLEOTIDE SEQUENCE [MRNA]</scope>
    <source>
        <tissue>Ovary</tissue>
    </source>
</reference>
<reference key="2">
    <citation type="journal article" date="2004" name="Nature">
        <title>Genome sequence of the Brown Norway rat yields insights into mammalian evolution.</title>
        <authorList>
            <person name="Gibbs R.A."/>
            <person name="Weinstock G.M."/>
            <person name="Metzker M.L."/>
            <person name="Muzny D.M."/>
            <person name="Sodergren E.J."/>
            <person name="Scherer S."/>
            <person name="Scott G."/>
            <person name="Steffen D."/>
            <person name="Worley K.C."/>
            <person name="Burch P.E."/>
            <person name="Okwuonu G."/>
            <person name="Hines S."/>
            <person name="Lewis L."/>
            <person name="Deramo C."/>
            <person name="Delgado O."/>
            <person name="Dugan-Rocha S."/>
            <person name="Miner G."/>
            <person name="Morgan M."/>
            <person name="Hawes A."/>
            <person name="Gill R."/>
            <person name="Holt R.A."/>
            <person name="Adams M.D."/>
            <person name="Amanatides P.G."/>
            <person name="Baden-Tillson H."/>
            <person name="Barnstead M."/>
            <person name="Chin S."/>
            <person name="Evans C.A."/>
            <person name="Ferriera S."/>
            <person name="Fosler C."/>
            <person name="Glodek A."/>
            <person name="Gu Z."/>
            <person name="Jennings D."/>
            <person name="Kraft C.L."/>
            <person name="Nguyen T."/>
            <person name="Pfannkoch C.M."/>
            <person name="Sitter C."/>
            <person name="Sutton G.G."/>
            <person name="Venter J.C."/>
            <person name="Woodage T."/>
            <person name="Smith D."/>
            <person name="Lee H.-M."/>
            <person name="Gustafson E."/>
            <person name="Cahill P."/>
            <person name="Kana A."/>
            <person name="Doucette-Stamm L."/>
            <person name="Weinstock K."/>
            <person name="Fechtel K."/>
            <person name="Weiss R.B."/>
            <person name="Dunn D.M."/>
            <person name="Green E.D."/>
            <person name="Blakesley R.W."/>
            <person name="Bouffard G.G."/>
            <person name="De Jong P.J."/>
            <person name="Osoegawa K."/>
            <person name="Zhu B."/>
            <person name="Marra M."/>
            <person name="Schein J."/>
            <person name="Bosdet I."/>
            <person name="Fjell C."/>
            <person name="Jones S."/>
            <person name="Krzywinski M."/>
            <person name="Mathewson C."/>
            <person name="Siddiqui A."/>
            <person name="Wye N."/>
            <person name="McPherson J."/>
            <person name="Zhao S."/>
            <person name="Fraser C.M."/>
            <person name="Shetty J."/>
            <person name="Shatsman S."/>
            <person name="Geer K."/>
            <person name="Chen Y."/>
            <person name="Abramzon S."/>
            <person name="Nierman W.C."/>
            <person name="Havlak P.H."/>
            <person name="Chen R."/>
            <person name="Durbin K.J."/>
            <person name="Egan A."/>
            <person name="Ren Y."/>
            <person name="Song X.-Z."/>
            <person name="Li B."/>
            <person name="Liu Y."/>
            <person name="Qin X."/>
            <person name="Cawley S."/>
            <person name="Cooney A.J."/>
            <person name="D'Souza L.M."/>
            <person name="Martin K."/>
            <person name="Wu J.Q."/>
            <person name="Gonzalez-Garay M.L."/>
            <person name="Jackson A.R."/>
            <person name="Kalafus K.J."/>
            <person name="McLeod M.P."/>
            <person name="Milosavljevic A."/>
            <person name="Virk D."/>
            <person name="Volkov A."/>
            <person name="Wheeler D.A."/>
            <person name="Zhang Z."/>
            <person name="Bailey J.A."/>
            <person name="Eichler E.E."/>
            <person name="Tuzun E."/>
            <person name="Birney E."/>
            <person name="Mongin E."/>
            <person name="Ureta-Vidal A."/>
            <person name="Woodwark C."/>
            <person name="Zdobnov E."/>
            <person name="Bork P."/>
            <person name="Suyama M."/>
            <person name="Torrents D."/>
            <person name="Alexandersson M."/>
            <person name="Trask B.J."/>
            <person name="Young J.M."/>
            <person name="Huang H."/>
            <person name="Wang H."/>
            <person name="Xing H."/>
            <person name="Daniels S."/>
            <person name="Gietzen D."/>
            <person name="Schmidt J."/>
            <person name="Stevens K."/>
            <person name="Vitt U."/>
            <person name="Wingrove J."/>
            <person name="Camara F."/>
            <person name="Mar Alba M."/>
            <person name="Abril J.F."/>
            <person name="Guigo R."/>
            <person name="Smit A."/>
            <person name="Dubchak I."/>
            <person name="Rubin E.M."/>
            <person name="Couronne O."/>
            <person name="Poliakov A."/>
            <person name="Huebner N."/>
            <person name="Ganten D."/>
            <person name="Goesele C."/>
            <person name="Hummel O."/>
            <person name="Kreitler T."/>
            <person name="Lee Y.-A."/>
            <person name="Monti J."/>
            <person name="Schulz H."/>
            <person name="Zimdahl H."/>
            <person name="Himmelbauer H."/>
            <person name="Lehrach H."/>
            <person name="Jacob H.J."/>
            <person name="Bromberg S."/>
            <person name="Gullings-Handley J."/>
            <person name="Jensen-Seaman M.I."/>
            <person name="Kwitek A.E."/>
            <person name="Lazar J."/>
            <person name="Pasko D."/>
            <person name="Tonellato P.J."/>
            <person name="Twigger S."/>
            <person name="Ponting C.P."/>
            <person name="Duarte J.M."/>
            <person name="Rice S."/>
            <person name="Goodstadt L."/>
            <person name="Beatson S.A."/>
            <person name="Emes R.D."/>
            <person name="Winter E.E."/>
            <person name="Webber C."/>
            <person name="Brandt P."/>
            <person name="Nyakatura G."/>
            <person name="Adetobi M."/>
            <person name="Chiaromonte F."/>
            <person name="Elnitski L."/>
            <person name="Eswara P."/>
            <person name="Hardison R.C."/>
            <person name="Hou M."/>
            <person name="Kolbe D."/>
            <person name="Makova K."/>
            <person name="Miller W."/>
            <person name="Nekrutenko A."/>
            <person name="Riemer C."/>
            <person name="Schwartz S."/>
            <person name="Taylor J."/>
            <person name="Yang S."/>
            <person name="Zhang Y."/>
            <person name="Lindpaintner K."/>
            <person name="Andrews T.D."/>
            <person name="Caccamo M."/>
            <person name="Clamp M."/>
            <person name="Clarke L."/>
            <person name="Curwen V."/>
            <person name="Durbin R.M."/>
            <person name="Eyras E."/>
            <person name="Searle S.M."/>
            <person name="Cooper G.M."/>
            <person name="Batzoglou S."/>
            <person name="Brudno M."/>
            <person name="Sidow A."/>
            <person name="Stone E.A."/>
            <person name="Payseur B.A."/>
            <person name="Bourque G."/>
            <person name="Lopez-Otin C."/>
            <person name="Puente X.S."/>
            <person name="Chakrabarti K."/>
            <person name="Chatterji S."/>
            <person name="Dewey C."/>
            <person name="Pachter L."/>
            <person name="Bray N."/>
            <person name="Yap V.B."/>
            <person name="Caspi A."/>
            <person name="Tesler G."/>
            <person name="Pevzner P.A."/>
            <person name="Haussler D."/>
            <person name="Roskin K.M."/>
            <person name="Baertsch R."/>
            <person name="Clawson H."/>
            <person name="Furey T.S."/>
            <person name="Hinrichs A.S."/>
            <person name="Karolchik D."/>
            <person name="Kent W.J."/>
            <person name="Rosenbloom K.R."/>
            <person name="Trumbower H."/>
            <person name="Weirauch M."/>
            <person name="Cooper D.N."/>
            <person name="Stenson P.D."/>
            <person name="Ma B."/>
            <person name="Brent M."/>
            <person name="Arumugam M."/>
            <person name="Shteynberg D."/>
            <person name="Copley R.R."/>
            <person name="Taylor M.S."/>
            <person name="Riethman H."/>
            <person name="Mudunuri U."/>
            <person name="Peterson J."/>
            <person name="Guyer M."/>
            <person name="Felsenfeld A."/>
            <person name="Old S."/>
            <person name="Mockrin S."/>
            <person name="Collins F.S."/>
        </authorList>
    </citation>
    <scope>NUCLEOTIDE SEQUENCE [LARGE SCALE GENOMIC DNA]</scope>
    <source>
        <strain>Brown Norway</strain>
    </source>
</reference>
<reference key="3">
    <citation type="submission" date="2005-07" db="EMBL/GenBank/DDBJ databases">
        <authorList>
            <person name="Mural R.J."/>
            <person name="Adams M.D."/>
            <person name="Myers E.W."/>
            <person name="Smith H.O."/>
            <person name="Venter J.C."/>
        </authorList>
    </citation>
    <scope>NUCLEOTIDE SEQUENCE [LARGE SCALE GENOMIC DNA]</scope>
    <source>
        <strain>Brown Norway</strain>
    </source>
</reference>
<accession>Q9Z2H4</accession>
<accession>G3V6R1</accession>
<organism>
    <name type="scientific">Rattus norvegicus</name>
    <name type="common">Rat</name>
    <dbReference type="NCBI Taxonomy" id="10116"/>
    <lineage>
        <taxon>Eukaryota</taxon>
        <taxon>Metazoa</taxon>
        <taxon>Chordata</taxon>
        <taxon>Craniata</taxon>
        <taxon>Vertebrata</taxon>
        <taxon>Euteleostomi</taxon>
        <taxon>Mammalia</taxon>
        <taxon>Eutheria</taxon>
        <taxon>Euarchontoglires</taxon>
        <taxon>Glires</taxon>
        <taxon>Rodentia</taxon>
        <taxon>Myomorpha</taxon>
        <taxon>Muroidea</taxon>
        <taxon>Muridae</taxon>
        <taxon>Murinae</taxon>
        <taxon>Rattus</taxon>
    </lineage>
</organism>